<organism>
    <name type="scientific">Paraburkholderia xenovorans (strain LB400)</name>
    <dbReference type="NCBI Taxonomy" id="266265"/>
    <lineage>
        <taxon>Bacteria</taxon>
        <taxon>Pseudomonadati</taxon>
        <taxon>Pseudomonadota</taxon>
        <taxon>Betaproteobacteria</taxon>
        <taxon>Burkholderiales</taxon>
        <taxon>Burkholderiaceae</taxon>
        <taxon>Paraburkholderia</taxon>
    </lineage>
</organism>
<evidence type="ECO:0000255" key="1">
    <source>
        <dbReference type="HAMAP-Rule" id="MF_00111"/>
    </source>
</evidence>
<sequence>MDKLVIEGGYPLSGEVVVSGAKNAALPILCAGLLSAQPVHLENVPDLQDVRTMLKLLGQMGVQIESGDGRVSLNASKVDNLVAPYEMVKTMRASILVLGPLVARFGHARVSLPGGCAIGARPVDQHIKGLQAMGAEITIEHGFIEARAKRLKGTRIVTDMITVTGTENLLMAAVLAEGETVIENAAREPEVGDLAHLLVEMGAKIEGIGTDRLVIQGVDKLHGAKHTVIPDRIEAGTFLCAVAAAGGDVTLRKVRPLILEAVTEKLREAGVTVEEGDDWMRVRMNKRPNAVTFRTSEYPAFPTDMQAQFMALNTIATGTSQVVETIFENRFMHVQELNRLGANITIDGNTALVTGVEQLSGAKVMATDLRASASLVIAALRADGETLIDRIYHLDRGYDRMETKLTALGAKVRRVSGSQA</sequence>
<name>MURA_PARXL</name>
<accession>Q13TQ2</accession>
<feature type="chain" id="PRO_1000023023" description="UDP-N-acetylglucosamine 1-carboxyvinyltransferase">
    <location>
        <begin position="1"/>
        <end position="420"/>
    </location>
</feature>
<feature type="active site" description="Proton donor" evidence="1">
    <location>
        <position position="116"/>
    </location>
</feature>
<feature type="binding site" evidence="1">
    <location>
        <begin position="22"/>
        <end position="23"/>
    </location>
    <ligand>
        <name>phosphoenolpyruvate</name>
        <dbReference type="ChEBI" id="CHEBI:58702"/>
    </ligand>
</feature>
<feature type="binding site" evidence="1">
    <location>
        <position position="92"/>
    </location>
    <ligand>
        <name>UDP-N-acetyl-alpha-D-glucosamine</name>
        <dbReference type="ChEBI" id="CHEBI:57705"/>
    </ligand>
</feature>
<feature type="binding site" evidence="1">
    <location>
        <begin position="121"/>
        <end position="125"/>
    </location>
    <ligand>
        <name>UDP-N-acetyl-alpha-D-glucosamine</name>
        <dbReference type="ChEBI" id="CHEBI:57705"/>
    </ligand>
</feature>
<feature type="binding site" evidence="1">
    <location>
        <position position="304"/>
    </location>
    <ligand>
        <name>UDP-N-acetyl-alpha-D-glucosamine</name>
        <dbReference type="ChEBI" id="CHEBI:57705"/>
    </ligand>
</feature>
<feature type="binding site" evidence="1">
    <location>
        <position position="326"/>
    </location>
    <ligand>
        <name>UDP-N-acetyl-alpha-D-glucosamine</name>
        <dbReference type="ChEBI" id="CHEBI:57705"/>
    </ligand>
</feature>
<feature type="modified residue" description="2-(S-cysteinyl)pyruvic acid O-phosphothioketal" evidence="1">
    <location>
        <position position="116"/>
    </location>
</feature>
<gene>
    <name evidence="1" type="primary">murA</name>
    <name type="ordered locus">Bxeno_A3999</name>
    <name type="ORF">Bxe_A0396</name>
</gene>
<proteinExistence type="inferred from homology"/>
<dbReference type="EC" id="2.5.1.7" evidence="1"/>
<dbReference type="EMBL" id="CP000270">
    <property type="protein sequence ID" value="ABE32537.1"/>
    <property type="molecule type" value="Genomic_DNA"/>
</dbReference>
<dbReference type="SMR" id="Q13TQ2"/>
<dbReference type="STRING" id="266265.Bxe_A0396"/>
<dbReference type="KEGG" id="bxb:DR64_2566"/>
<dbReference type="KEGG" id="bxe:Bxe_A0396"/>
<dbReference type="PATRIC" id="fig|266265.5.peg.4224"/>
<dbReference type="eggNOG" id="COG0766">
    <property type="taxonomic scope" value="Bacteria"/>
</dbReference>
<dbReference type="OrthoDB" id="9803760at2"/>
<dbReference type="UniPathway" id="UPA00219"/>
<dbReference type="Proteomes" id="UP000001817">
    <property type="component" value="Chromosome 1"/>
</dbReference>
<dbReference type="GO" id="GO:0005737">
    <property type="term" value="C:cytoplasm"/>
    <property type="evidence" value="ECO:0007669"/>
    <property type="project" value="UniProtKB-SubCell"/>
</dbReference>
<dbReference type="GO" id="GO:0008760">
    <property type="term" value="F:UDP-N-acetylglucosamine 1-carboxyvinyltransferase activity"/>
    <property type="evidence" value="ECO:0007669"/>
    <property type="project" value="UniProtKB-UniRule"/>
</dbReference>
<dbReference type="GO" id="GO:0051301">
    <property type="term" value="P:cell division"/>
    <property type="evidence" value="ECO:0007669"/>
    <property type="project" value="UniProtKB-KW"/>
</dbReference>
<dbReference type="GO" id="GO:0071555">
    <property type="term" value="P:cell wall organization"/>
    <property type="evidence" value="ECO:0007669"/>
    <property type="project" value="UniProtKB-KW"/>
</dbReference>
<dbReference type="GO" id="GO:0009252">
    <property type="term" value="P:peptidoglycan biosynthetic process"/>
    <property type="evidence" value="ECO:0007669"/>
    <property type="project" value="UniProtKB-UniRule"/>
</dbReference>
<dbReference type="GO" id="GO:0008360">
    <property type="term" value="P:regulation of cell shape"/>
    <property type="evidence" value="ECO:0007669"/>
    <property type="project" value="UniProtKB-KW"/>
</dbReference>
<dbReference type="GO" id="GO:0019277">
    <property type="term" value="P:UDP-N-acetylgalactosamine biosynthetic process"/>
    <property type="evidence" value="ECO:0007669"/>
    <property type="project" value="InterPro"/>
</dbReference>
<dbReference type="CDD" id="cd01555">
    <property type="entry name" value="UdpNAET"/>
    <property type="match status" value="1"/>
</dbReference>
<dbReference type="FunFam" id="3.65.10.10:FF:000001">
    <property type="entry name" value="UDP-N-acetylglucosamine 1-carboxyvinyltransferase"/>
    <property type="match status" value="1"/>
</dbReference>
<dbReference type="Gene3D" id="3.65.10.10">
    <property type="entry name" value="Enolpyruvate transferase domain"/>
    <property type="match status" value="2"/>
</dbReference>
<dbReference type="HAMAP" id="MF_00111">
    <property type="entry name" value="MurA"/>
    <property type="match status" value="1"/>
</dbReference>
<dbReference type="InterPro" id="IPR001986">
    <property type="entry name" value="Enolpyruvate_Tfrase_dom"/>
</dbReference>
<dbReference type="InterPro" id="IPR036968">
    <property type="entry name" value="Enolpyruvate_Tfrase_sf"/>
</dbReference>
<dbReference type="InterPro" id="IPR050068">
    <property type="entry name" value="MurA_subfamily"/>
</dbReference>
<dbReference type="InterPro" id="IPR013792">
    <property type="entry name" value="RNA3'P_cycl/enolpyr_Trfase_a/b"/>
</dbReference>
<dbReference type="InterPro" id="IPR005750">
    <property type="entry name" value="UDP_GlcNAc_COvinyl_MurA"/>
</dbReference>
<dbReference type="NCBIfam" id="TIGR01072">
    <property type="entry name" value="murA"/>
    <property type="match status" value="1"/>
</dbReference>
<dbReference type="NCBIfam" id="NF006873">
    <property type="entry name" value="PRK09369.1"/>
    <property type="match status" value="1"/>
</dbReference>
<dbReference type="PANTHER" id="PTHR43783">
    <property type="entry name" value="UDP-N-ACETYLGLUCOSAMINE 1-CARBOXYVINYLTRANSFERASE"/>
    <property type="match status" value="1"/>
</dbReference>
<dbReference type="PANTHER" id="PTHR43783:SF1">
    <property type="entry name" value="UDP-N-ACETYLGLUCOSAMINE 1-CARBOXYVINYLTRANSFERASE"/>
    <property type="match status" value="1"/>
</dbReference>
<dbReference type="Pfam" id="PF00275">
    <property type="entry name" value="EPSP_synthase"/>
    <property type="match status" value="1"/>
</dbReference>
<dbReference type="SUPFAM" id="SSF55205">
    <property type="entry name" value="EPT/RTPC-like"/>
    <property type="match status" value="1"/>
</dbReference>
<reference key="1">
    <citation type="journal article" date="2006" name="Proc. Natl. Acad. Sci. U.S.A.">
        <title>Burkholderia xenovorans LB400 harbors a multi-replicon, 9.73-Mbp genome shaped for versatility.</title>
        <authorList>
            <person name="Chain P.S.G."/>
            <person name="Denef V.J."/>
            <person name="Konstantinidis K.T."/>
            <person name="Vergez L.M."/>
            <person name="Agullo L."/>
            <person name="Reyes V.L."/>
            <person name="Hauser L."/>
            <person name="Cordova M."/>
            <person name="Gomez L."/>
            <person name="Gonzalez M."/>
            <person name="Land M."/>
            <person name="Lao V."/>
            <person name="Larimer F."/>
            <person name="LiPuma J.J."/>
            <person name="Mahenthiralingam E."/>
            <person name="Malfatti S.A."/>
            <person name="Marx C.J."/>
            <person name="Parnell J.J."/>
            <person name="Ramette A."/>
            <person name="Richardson P."/>
            <person name="Seeger M."/>
            <person name="Smith D."/>
            <person name="Spilker T."/>
            <person name="Sul W.J."/>
            <person name="Tsoi T.V."/>
            <person name="Ulrich L.E."/>
            <person name="Zhulin I.B."/>
            <person name="Tiedje J.M."/>
        </authorList>
    </citation>
    <scope>NUCLEOTIDE SEQUENCE [LARGE SCALE GENOMIC DNA]</scope>
    <source>
        <strain>LB400</strain>
    </source>
</reference>
<comment type="function">
    <text evidence="1">Cell wall formation. Adds enolpyruvyl to UDP-N-acetylglucosamine.</text>
</comment>
<comment type="catalytic activity">
    <reaction evidence="1">
        <text>phosphoenolpyruvate + UDP-N-acetyl-alpha-D-glucosamine = UDP-N-acetyl-3-O-(1-carboxyvinyl)-alpha-D-glucosamine + phosphate</text>
        <dbReference type="Rhea" id="RHEA:18681"/>
        <dbReference type="ChEBI" id="CHEBI:43474"/>
        <dbReference type="ChEBI" id="CHEBI:57705"/>
        <dbReference type="ChEBI" id="CHEBI:58702"/>
        <dbReference type="ChEBI" id="CHEBI:68483"/>
        <dbReference type="EC" id="2.5.1.7"/>
    </reaction>
</comment>
<comment type="pathway">
    <text evidence="1">Cell wall biogenesis; peptidoglycan biosynthesis.</text>
</comment>
<comment type="subcellular location">
    <subcellularLocation>
        <location evidence="1">Cytoplasm</location>
    </subcellularLocation>
</comment>
<comment type="similarity">
    <text evidence="1">Belongs to the EPSP synthase family. MurA subfamily.</text>
</comment>
<protein>
    <recommendedName>
        <fullName evidence="1">UDP-N-acetylglucosamine 1-carboxyvinyltransferase</fullName>
        <ecNumber evidence="1">2.5.1.7</ecNumber>
    </recommendedName>
    <alternativeName>
        <fullName evidence="1">Enoylpyruvate transferase</fullName>
    </alternativeName>
    <alternativeName>
        <fullName evidence="1">UDP-N-acetylglucosamine enolpyruvyl transferase</fullName>
        <shortName evidence="1">EPT</shortName>
    </alternativeName>
</protein>
<keyword id="KW-0131">Cell cycle</keyword>
<keyword id="KW-0132">Cell division</keyword>
<keyword id="KW-0133">Cell shape</keyword>
<keyword id="KW-0961">Cell wall biogenesis/degradation</keyword>
<keyword id="KW-0963">Cytoplasm</keyword>
<keyword id="KW-0573">Peptidoglycan synthesis</keyword>
<keyword id="KW-0670">Pyruvate</keyword>
<keyword id="KW-1185">Reference proteome</keyword>
<keyword id="KW-0808">Transferase</keyword>